<feature type="chain" id="PRO_0000303560" description="tRNA N6-adenosine threonylcarbamoyltransferase">
    <location>
        <begin position="1"/>
        <end position="336"/>
    </location>
</feature>
<feature type="binding site" evidence="1">
    <location>
        <position position="114"/>
    </location>
    <ligand>
        <name>Fe cation</name>
        <dbReference type="ChEBI" id="CHEBI:24875"/>
    </ligand>
</feature>
<feature type="binding site" evidence="1">
    <location>
        <position position="118"/>
    </location>
    <ligand>
        <name>Fe cation</name>
        <dbReference type="ChEBI" id="CHEBI:24875"/>
    </ligand>
</feature>
<feature type="binding site" evidence="1">
    <location>
        <begin position="136"/>
        <end position="140"/>
    </location>
    <ligand>
        <name>substrate</name>
    </ligand>
</feature>
<feature type="binding site" evidence="1">
    <location>
        <position position="169"/>
    </location>
    <ligand>
        <name>substrate</name>
    </ligand>
</feature>
<feature type="binding site" evidence="1">
    <location>
        <position position="182"/>
    </location>
    <ligand>
        <name>substrate</name>
    </ligand>
</feature>
<feature type="binding site" evidence="1">
    <location>
        <position position="186"/>
    </location>
    <ligand>
        <name>substrate</name>
    </ligand>
</feature>
<feature type="binding site" evidence="1">
    <location>
        <position position="275"/>
    </location>
    <ligand>
        <name>substrate</name>
    </ligand>
</feature>
<feature type="binding site" evidence="1">
    <location>
        <position position="301"/>
    </location>
    <ligand>
        <name>Fe cation</name>
        <dbReference type="ChEBI" id="CHEBI:24875"/>
    </ligand>
</feature>
<sequence length="336" mass="36125">MIDRYILAIESSCDETSVAILKNEDQLLSNIIASQVESHKRFGGVVPEVASRHHVEVITLCIQDALQEAGITAGDLSAVAVTYGPGLVGALLVGMAAAKAFAWANHLPLIPVNHMAGHLMAAQSIADLQYPLLALLVSGGHTELVYVAAPGDYRIVGETRDDAVGEAYDKVGRVMGLTYPAGKEIDQLAHQGQDIYDFPRAMIKEDNLEFSFSGLKSAFINLHHNARQKGEQLRLEDLCASFQAAVLDILMVKTKKALAAYPVKTLVIAGGVAANQGLRERLKEDIKDINVVIPPLRLCGDNAGMIAYAAAVEYEKGHFAELDLNAKPSLAFEGLE</sequence>
<gene>
    <name evidence="1" type="primary">tsaD</name>
    <name type="synonym">gcp</name>
    <name type="ordered locus">SMU_387</name>
</gene>
<organism>
    <name type="scientific">Streptococcus mutans serotype c (strain ATCC 700610 / UA159)</name>
    <dbReference type="NCBI Taxonomy" id="210007"/>
    <lineage>
        <taxon>Bacteria</taxon>
        <taxon>Bacillati</taxon>
        <taxon>Bacillota</taxon>
        <taxon>Bacilli</taxon>
        <taxon>Lactobacillales</taxon>
        <taxon>Streptococcaceae</taxon>
        <taxon>Streptococcus</taxon>
    </lineage>
</organism>
<protein>
    <recommendedName>
        <fullName evidence="1">tRNA N6-adenosine threonylcarbamoyltransferase</fullName>
        <ecNumber evidence="1">2.3.1.234</ecNumber>
    </recommendedName>
    <alternativeName>
        <fullName evidence="1">N6-L-threonylcarbamoyladenine synthase</fullName>
        <shortName evidence="1">t(6)A synthase</shortName>
    </alternativeName>
    <alternativeName>
        <fullName evidence="1">t(6)A37 threonylcarbamoyladenosine biosynthesis protein TsaD</fullName>
    </alternativeName>
    <alternativeName>
        <fullName evidence="1">tRNA threonylcarbamoyladenosine biosynthesis protein TsaD</fullName>
    </alternativeName>
</protein>
<reference key="1">
    <citation type="journal article" date="2002" name="Proc. Natl. Acad. Sci. U.S.A.">
        <title>Genome sequence of Streptococcus mutans UA159, a cariogenic dental pathogen.</title>
        <authorList>
            <person name="Ajdic D.J."/>
            <person name="McShan W.M."/>
            <person name="McLaughlin R.E."/>
            <person name="Savic G."/>
            <person name="Chang J."/>
            <person name="Carson M.B."/>
            <person name="Primeaux C."/>
            <person name="Tian R."/>
            <person name="Kenton S."/>
            <person name="Jia H.G."/>
            <person name="Lin S.P."/>
            <person name="Qian Y."/>
            <person name="Li S."/>
            <person name="Zhu H."/>
            <person name="Najar F.Z."/>
            <person name="Lai H."/>
            <person name="White J."/>
            <person name="Roe B.A."/>
            <person name="Ferretti J.J."/>
        </authorList>
    </citation>
    <scope>NUCLEOTIDE SEQUENCE [LARGE SCALE GENOMIC DNA]</scope>
    <source>
        <strain>ATCC 700610 / UA159</strain>
    </source>
</reference>
<name>TSAD_STRMU</name>
<keyword id="KW-0012">Acyltransferase</keyword>
<keyword id="KW-0963">Cytoplasm</keyword>
<keyword id="KW-0408">Iron</keyword>
<keyword id="KW-0479">Metal-binding</keyword>
<keyword id="KW-1185">Reference proteome</keyword>
<keyword id="KW-0808">Transferase</keyword>
<keyword id="KW-0819">tRNA processing</keyword>
<comment type="function">
    <text evidence="1">Required for the formation of a threonylcarbamoyl group on adenosine at position 37 (t(6)A37) in tRNAs that read codons beginning with adenine. Is involved in the transfer of the threonylcarbamoyl moiety of threonylcarbamoyl-AMP (TC-AMP) to the N6 group of A37, together with TsaE and TsaB. TsaD likely plays a direct catalytic role in this reaction.</text>
</comment>
<comment type="catalytic activity">
    <reaction evidence="1">
        <text>L-threonylcarbamoyladenylate + adenosine(37) in tRNA = N(6)-L-threonylcarbamoyladenosine(37) in tRNA + AMP + H(+)</text>
        <dbReference type="Rhea" id="RHEA:37059"/>
        <dbReference type="Rhea" id="RHEA-COMP:10162"/>
        <dbReference type="Rhea" id="RHEA-COMP:10163"/>
        <dbReference type="ChEBI" id="CHEBI:15378"/>
        <dbReference type="ChEBI" id="CHEBI:73682"/>
        <dbReference type="ChEBI" id="CHEBI:74411"/>
        <dbReference type="ChEBI" id="CHEBI:74418"/>
        <dbReference type="ChEBI" id="CHEBI:456215"/>
        <dbReference type="EC" id="2.3.1.234"/>
    </reaction>
</comment>
<comment type="cofactor">
    <cofactor evidence="1">
        <name>Fe(2+)</name>
        <dbReference type="ChEBI" id="CHEBI:29033"/>
    </cofactor>
    <text evidence="1">Binds 1 Fe(2+) ion per subunit.</text>
</comment>
<comment type="subcellular location">
    <subcellularLocation>
        <location evidence="1">Cytoplasm</location>
    </subcellularLocation>
</comment>
<comment type="similarity">
    <text evidence="1">Belongs to the KAE1 / TsaD family.</text>
</comment>
<dbReference type="EC" id="2.3.1.234" evidence="1"/>
<dbReference type="EMBL" id="AE014133">
    <property type="protein sequence ID" value="AAN58143.1"/>
    <property type="molecule type" value="Genomic_DNA"/>
</dbReference>
<dbReference type="RefSeq" id="NP_720837.1">
    <property type="nucleotide sequence ID" value="NC_004350.2"/>
</dbReference>
<dbReference type="RefSeq" id="WP_002262631.1">
    <property type="nucleotide sequence ID" value="NC_004350.2"/>
</dbReference>
<dbReference type="SMR" id="Q8DVT0"/>
<dbReference type="STRING" id="210007.SMU_387"/>
<dbReference type="GeneID" id="93860035"/>
<dbReference type="KEGG" id="smu:SMU_387"/>
<dbReference type="PATRIC" id="fig|210007.7.peg.340"/>
<dbReference type="eggNOG" id="COG0533">
    <property type="taxonomic scope" value="Bacteria"/>
</dbReference>
<dbReference type="HOGENOM" id="CLU_023208_0_1_9"/>
<dbReference type="OrthoDB" id="9806197at2"/>
<dbReference type="PhylomeDB" id="Q8DVT0"/>
<dbReference type="Proteomes" id="UP000002512">
    <property type="component" value="Chromosome"/>
</dbReference>
<dbReference type="GO" id="GO:0005737">
    <property type="term" value="C:cytoplasm"/>
    <property type="evidence" value="ECO:0007669"/>
    <property type="project" value="UniProtKB-SubCell"/>
</dbReference>
<dbReference type="GO" id="GO:0005506">
    <property type="term" value="F:iron ion binding"/>
    <property type="evidence" value="ECO:0007669"/>
    <property type="project" value="UniProtKB-UniRule"/>
</dbReference>
<dbReference type="GO" id="GO:0061711">
    <property type="term" value="F:N(6)-L-threonylcarbamoyladenine synthase activity"/>
    <property type="evidence" value="ECO:0007669"/>
    <property type="project" value="UniProtKB-EC"/>
</dbReference>
<dbReference type="GO" id="GO:0002949">
    <property type="term" value="P:tRNA threonylcarbamoyladenosine modification"/>
    <property type="evidence" value="ECO:0007669"/>
    <property type="project" value="UniProtKB-UniRule"/>
</dbReference>
<dbReference type="CDD" id="cd24133">
    <property type="entry name" value="ASKHA_NBD_TsaD_bac"/>
    <property type="match status" value="1"/>
</dbReference>
<dbReference type="FunFam" id="3.30.420.40:FF:000012">
    <property type="entry name" value="tRNA N6-adenosine threonylcarbamoyltransferase"/>
    <property type="match status" value="1"/>
</dbReference>
<dbReference type="FunFam" id="3.30.420.40:FF:000040">
    <property type="entry name" value="tRNA N6-adenosine threonylcarbamoyltransferase"/>
    <property type="match status" value="1"/>
</dbReference>
<dbReference type="Gene3D" id="3.30.420.40">
    <property type="match status" value="2"/>
</dbReference>
<dbReference type="HAMAP" id="MF_01445">
    <property type="entry name" value="TsaD"/>
    <property type="match status" value="1"/>
</dbReference>
<dbReference type="InterPro" id="IPR043129">
    <property type="entry name" value="ATPase_NBD"/>
</dbReference>
<dbReference type="InterPro" id="IPR000905">
    <property type="entry name" value="Gcp-like_dom"/>
</dbReference>
<dbReference type="InterPro" id="IPR017861">
    <property type="entry name" value="KAE1/TsaD"/>
</dbReference>
<dbReference type="InterPro" id="IPR022450">
    <property type="entry name" value="TsaD"/>
</dbReference>
<dbReference type="NCBIfam" id="TIGR00329">
    <property type="entry name" value="gcp_kae1"/>
    <property type="match status" value="1"/>
</dbReference>
<dbReference type="NCBIfam" id="TIGR03723">
    <property type="entry name" value="T6A_TsaD_YgjD"/>
    <property type="match status" value="1"/>
</dbReference>
<dbReference type="PANTHER" id="PTHR11735">
    <property type="entry name" value="TRNA N6-ADENOSINE THREONYLCARBAMOYLTRANSFERASE"/>
    <property type="match status" value="1"/>
</dbReference>
<dbReference type="PANTHER" id="PTHR11735:SF6">
    <property type="entry name" value="TRNA N6-ADENOSINE THREONYLCARBAMOYLTRANSFERASE, MITOCHONDRIAL"/>
    <property type="match status" value="1"/>
</dbReference>
<dbReference type="Pfam" id="PF00814">
    <property type="entry name" value="TsaD"/>
    <property type="match status" value="1"/>
</dbReference>
<dbReference type="PRINTS" id="PR00789">
    <property type="entry name" value="OSIALOPTASE"/>
</dbReference>
<dbReference type="SUPFAM" id="SSF53067">
    <property type="entry name" value="Actin-like ATPase domain"/>
    <property type="match status" value="1"/>
</dbReference>
<accession>Q8DVT0</accession>
<evidence type="ECO:0000255" key="1">
    <source>
        <dbReference type="HAMAP-Rule" id="MF_01445"/>
    </source>
</evidence>
<proteinExistence type="inferred from homology"/>